<sequence>MRFHTLLFLSFLLLVSCALICTAQHPGLEKSGMFHENVGKGQHIEEKRSCIERMQTCGVEAGLPCCSGAPCICPYIGDCICIQ</sequence>
<keyword id="KW-1015">Disulfide bond</keyword>
<keyword id="KW-0872">Ion channel impairing toxin</keyword>
<keyword id="KW-0960">Knottin</keyword>
<keyword id="KW-0964">Secreted</keyword>
<keyword id="KW-0732">Signal</keyword>
<keyword id="KW-0800">Toxin</keyword>
<evidence type="ECO:0000250" key="1"/>
<evidence type="ECO:0000255" key="2"/>
<protein>
    <recommendedName>
        <fullName>U25-theraphotoxin-Cg1b</fullName>
        <shortName>U25-TRTX-Cg1b</shortName>
    </recommendedName>
    <alternativeName>
        <fullName>Jingzhaotoxin-55</fullName>
        <shortName>JZTX-55</shortName>
    </alternativeName>
</protein>
<organism>
    <name type="scientific">Chilobrachys guangxiensis</name>
    <name type="common">Chinese earth tiger tarantula</name>
    <name type="synonym">Chilobrachys jingzhao</name>
    <dbReference type="NCBI Taxonomy" id="278060"/>
    <lineage>
        <taxon>Eukaryota</taxon>
        <taxon>Metazoa</taxon>
        <taxon>Ecdysozoa</taxon>
        <taxon>Arthropoda</taxon>
        <taxon>Chelicerata</taxon>
        <taxon>Arachnida</taxon>
        <taxon>Araneae</taxon>
        <taxon>Mygalomorphae</taxon>
        <taxon>Theraphosidae</taxon>
        <taxon>Chilobrachys</taxon>
    </lineage>
</organism>
<dbReference type="EMBL" id="EU233906">
    <property type="protein sequence ID" value="ABY71725.1"/>
    <property type="molecule type" value="mRNA"/>
</dbReference>
<dbReference type="SMR" id="B1P1H5"/>
<dbReference type="ArachnoServer" id="AS000854">
    <property type="toxin name" value="U25-theraphotoxin-Cg1b"/>
</dbReference>
<dbReference type="GO" id="GO:0005576">
    <property type="term" value="C:extracellular region"/>
    <property type="evidence" value="ECO:0007669"/>
    <property type="project" value="UniProtKB-SubCell"/>
</dbReference>
<dbReference type="GO" id="GO:0099106">
    <property type="term" value="F:ion channel regulator activity"/>
    <property type="evidence" value="ECO:0007669"/>
    <property type="project" value="UniProtKB-KW"/>
</dbReference>
<dbReference type="GO" id="GO:0090729">
    <property type="term" value="F:toxin activity"/>
    <property type="evidence" value="ECO:0007669"/>
    <property type="project" value="UniProtKB-KW"/>
</dbReference>
<name>JZT55_CHIGU</name>
<reference key="1">
    <citation type="journal article" date="2008" name="Cell. Mol. Life Sci.">
        <title>Molecular diversity and evolution of cystine knot toxins of the tarantula Chilobrachys jingzhao.</title>
        <authorList>
            <person name="Chen J."/>
            <person name="Deng M."/>
            <person name="He Q."/>
            <person name="Meng E."/>
            <person name="Jiang L."/>
            <person name="Liao Z."/>
            <person name="Rong M."/>
            <person name="Liang S."/>
        </authorList>
    </citation>
    <scope>NUCLEOTIDE SEQUENCE [LARGE SCALE MRNA]</scope>
    <source>
        <tissue>Venom gland</tissue>
    </source>
</reference>
<accession>B1P1H5</accession>
<comment type="function">
    <text>Probable ion channel inhibitor.</text>
</comment>
<comment type="subcellular location">
    <subcellularLocation>
        <location evidence="1">Secreted</location>
    </subcellularLocation>
</comment>
<comment type="tissue specificity">
    <text>Expressed by the venom gland.</text>
</comment>
<comment type="domain">
    <text evidence="1">The presence of a 'disulfide through disulfide knot' structurally defines this protein as a knottin.</text>
</comment>
<comment type="similarity">
    <text>Belongs to the neurotoxin 07 (Beta/delta-agtx) family. 03 (aga-4) subfamily. JZTX sub-subfamily.</text>
</comment>
<feature type="signal peptide" evidence="2">
    <location>
        <begin position="1"/>
        <end position="23"/>
    </location>
</feature>
<feature type="propeptide" id="PRO_0000398524" evidence="1">
    <location>
        <begin position="24"/>
        <end position="48"/>
    </location>
</feature>
<feature type="peptide" id="PRO_0000398525" description="U25-theraphotoxin-Cg1b">
    <location>
        <begin position="49"/>
        <end position="83"/>
    </location>
</feature>
<feature type="disulfide bond" evidence="1">
    <location>
        <begin position="50"/>
        <end position="66"/>
    </location>
</feature>
<feature type="disulfide bond" evidence="1">
    <location>
        <begin position="57"/>
        <end position="71"/>
    </location>
</feature>
<feature type="disulfide bond" evidence="1">
    <location>
        <begin position="65"/>
        <end position="79"/>
    </location>
</feature>
<proteinExistence type="evidence at transcript level"/>